<gene>
    <name type="ordered locus">SAS2467</name>
</gene>
<keyword id="KW-0378">Hydrolase</keyword>
<dbReference type="EC" id="3.-.-.-"/>
<dbReference type="EMBL" id="BX571857">
    <property type="protein sequence ID" value="CAG44283.1"/>
    <property type="molecule type" value="Genomic_DNA"/>
</dbReference>
<dbReference type="RefSeq" id="WP_000448900.1">
    <property type="nucleotide sequence ID" value="NC_002953.3"/>
</dbReference>
<dbReference type="SMR" id="Q6G693"/>
<dbReference type="ESTHER" id="staau-SA2367">
    <property type="family name" value="6_AlphaBeta_hydrolase"/>
</dbReference>
<dbReference type="KEGG" id="sas:SAS2467"/>
<dbReference type="HOGENOM" id="CLU_083329_0_0_9"/>
<dbReference type="GO" id="GO:0016020">
    <property type="term" value="C:membrane"/>
    <property type="evidence" value="ECO:0007669"/>
    <property type="project" value="TreeGrafter"/>
</dbReference>
<dbReference type="GO" id="GO:0016787">
    <property type="term" value="F:hydrolase activity"/>
    <property type="evidence" value="ECO:0007669"/>
    <property type="project" value="UniProtKB-KW"/>
</dbReference>
<dbReference type="Gene3D" id="3.40.50.1820">
    <property type="entry name" value="alpha/beta hydrolase"/>
    <property type="match status" value="1"/>
</dbReference>
<dbReference type="InterPro" id="IPR000073">
    <property type="entry name" value="AB_hydrolase_1"/>
</dbReference>
<dbReference type="InterPro" id="IPR029058">
    <property type="entry name" value="AB_hydrolase_fold"/>
</dbReference>
<dbReference type="InterPro" id="IPR050266">
    <property type="entry name" value="AB_hydrolase_sf"/>
</dbReference>
<dbReference type="PANTHER" id="PTHR43798:SF33">
    <property type="entry name" value="HYDROLASE, PUTATIVE (AFU_ORTHOLOGUE AFUA_2G14860)-RELATED"/>
    <property type="match status" value="1"/>
</dbReference>
<dbReference type="PANTHER" id="PTHR43798">
    <property type="entry name" value="MONOACYLGLYCEROL LIPASE"/>
    <property type="match status" value="1"/>
</dbReference>
<dbReference type="Pfam" id="PF00561">
    <property type="entry name" value="Abhydrolase_1"/>
    <property type="match status" value="1"/>
</dbReference>
<dbReference type="SUPFAM" id="SSF53474">
    <property type="entry name" value="alpha/beta-Hydrolases"/>
    <property type="match status" value="1"/>
</dbReference>
<proteinExistence type="inferred from homology"/>
<comment type="similarity">
    <text evidence="2">Belongs to the AB hydrolase superfamily.</text>
</comment>
<name>Y2467_STAAS</name>
<sequence>METLELQGAKLRYHQVGQGPVLIFIPGANGTGDIFLPLAEQLKDHFTVVAVDRRDYGESELTEPLPDSASNPDSDYRVKRDAQDIAELAKSLSDEPVYILGSIVAMHVLKDYPEVVKKIAFHEPPINTFLPDSTYWKDKNDDIVHQILTEGLEKGMKTFGETLNIAPIDAKMMSQPADTEEGRIEQYKRTMFWSEFEIRQYTHSDITLDDFTKYSDKITLLNGTDSRGSFPQDVNFYINKETSIPIVDIPGGHLGYIQKPEGFADVLLNMWG</sequence>
<accession>Q6G693</accession>
<protein>
    <recommendedName>
        <fullName>Uncharacterized hydrolase SAS2467</fullName>
        <ecNumber>3.-.-.-</ecNumber>
    </recommendedName>
</protein>
<reference key="1">
    <citation type="journal article" date="2004" name="Proc. Natl. Acad. Sci. U.S.A.">
        <title>Complete genomes of two clinical Staphylococcus aureus strains: evidence for the rapid evolution of virulence and drug resistance.</title>
        <authorList>
            <person name="Holden M.T.G."/>
            <person name="Feil E.J."/>
            <person name="Lindsay J.A."/>
            <person name="Peacock S.J."/>
            <person name="Day N.P.J."/>
            <person name="Enright M.C."/>
            <person name="Foster T.J."/>
            <person name="Moore C.E."/>
            <person name="Hurst L."/>
            <person name="Atkin R."/>
            <person name="Barron A."/>
            <person name="Bason N."/>
            <person name="Bentley S.D."/>
            <person name="Chillingworth C."/>
            <person name="Chillingworth T."/>
            <person name="Churcher C."/>
            <person name="Clark L."/>
            <person name="Corton C."/>
            <person name="Cronin A."/>
            <person name="Doggett J."/>
            <person name="Dowd L."/>
            <person name="Feltwell T."/>
            <person name="Hance Z."/>
            <person name="Harris B."/>
            <person name="Hauser H."/>
            <person name="Holroyd S."/>
            <person name="Jagels K."/>
            <person name="James K.D."/>
            <person name="Lennard N."/>
            <person name="Line A."/>
            <person name="Mayes R."/>
            <person name="Moule S."/>
            <person name="Mungall K."/>
            <person name="Ormond D."/>
            <person name="Quail M.A."/>
            <person name="Rabbinowitsch E."/>
            <person name="Rutherford K.M."/>
            <person name="Sanders M."/>
            <person name="Sharp S."/>
            <person name="Simmonds M."/>
            <person name="Stevens K."/>
            <person name="Whitehead S."/>
            <person name="Barrell B.G."/>
            <person name="Spratt B.G."/>
            <person name="Parkhill J."/>
        </authorList>
    </citation>
    <scope>NUCLEOTIDE SEQUENCE [LARGE SCALE GENOMIC DNA]</scope>
    <source>
        <strain>MSSA476</strain>
    </source>
</reference>
<evidence type="ECO:0000255" key="1"/>
<evidence type="ECO:0000305" key="2"/>
<feature type="chain" id="PRO_0000298612" description="Uncharacterized hydrolase SAS2467">
    <location>
        <begin position="1"/>
        <end position="272"/>
    </location>
</feature>
<feature type="domain" description="AB hydrolase-1" evidence="1">
    <location>
        <begin position="20"/>
        <end position="133"/>
    </location>
</feature>
<organism>
    <name type="scientific">Staphylococcus aureus (strain MSSA476)</name>
    <dbReference type="NCBI Taxonomy" id="282459"/>
    <lineage>
        <taxon>Bacteria</taxon>
        <taxon>Bacillati</taxon>
        <taxon>Bacillota</taxon>
        <taxon>Bacilli</taxon>
        <taxon>Bacillales</taxon>
        <taxon>Staphylococcaceae</taxon>
        <taxon>Staphylococcus</taxon>
    </lineage>
</organism>